<feature type="chain" id="PRO_1000024873" description="Ribonuclease PH">
    <location>
        <begin position="1"/>
        <end position="237"/>
    </location>
</feature>
<feature type="binding site" evidence="1">
    <location>
        <position position="86"/>
    </location>
    <ligand>
        <name>phosphate</name>
        <dbReference type="ChEBI" id="CHEBI:43474"/>
        <note>substrate</note>
    </ligand>
</feature>
<feature type="binding site" evidence="1">
    <location>
        <begin position="124"/>
        <end position="126"/>
    </location>
    <ligand>
        <name>phosphate</name>
        <dbReference type="ChEBI" id="CHEBI:43474"/>
        <note>substrate</note>
    </ligand>
</feature>
<evidence type="ECO:0000255" key="1">
    <source>
        <dbReference type="HAMAP-Rule" id="MF_00564"/>
    </source>
</evidence>
<proteinExistence type="inferred from homology"/>
<dbReference type="EC" id="2.7.7.56" evidence="1"/>
<dbReference type="EMBL" id="CP000362">
    <property type="protein sequence ID" value="ABG30141.1"/>
    <property type="molecule type" value="Genomic_DNA"/>
</dbReference>
<dbReference type="RefSeq" id="WP_011566763.1">
    <property type="nucleotide sequence ID" value="NC_008209.1"/>
</dbReference>
<dbReference type="SMR" id="Q16D02"/>
<dbReference type="STRING" id="375451.RD1_0426"/>
<dbReference type="KEGG" id="rde:RD1_0426"/>
<dbReference type="eggNOG" id="COG0689">
    <property type="taxonomic scope" value="Bacteria"/>
</dbReference>
<dbReference type="HOGENOM" id="CLU_050858_0_0_5"/>
<dbReference type="OrthoDB" id="9802265at2"/>
<dbReference type="Proteomes" id="UP000007029">
    <property type="component" value="Chromosome"/>
</dbReference>
<dbReference type="GO" id="GO:0000175">
    <property type="term" value="F:3'-5'-RNA exonuclease activity"/>
    <property type="evidence" value="ECO:0007669"/>
    <property type="project" value="UniProtKB-UniRule"/>
</dbReference>
<dbReference type="GO" id="GO:0000049">
    <property type="term" value="F:tRNA binding"/>
    <property type="evidence" value="ECO:0007669"/>
    <property type="project" value="UniProtKB-UniRule"/>
</dbReference>
<dbReference type="GO" id="GO:0009022">
    <property type="term" value="F:tRNA nucleotidyltransferase activity"/>
    <property type="evidence" value="ECO:0007669"/>
    <property type="project" value="UniProtKB-UniRule"/>
</dbReference>
<dbReference type="GO" id="GO:0016075">
    <property type="term" value="P:rRNA catabolic process"/>
    <property type="evidence" value="ECO:0007669"/>
    <property type="project" value="UniProtKB-UniRule"/>
</dbReference>
<dbReference type="GO" id="GO:0006364">
    <property type="term" value="P:rRNA processing"/>
    <property type="evidence" value="ECO:0007669"/>
    <property type="project" value="UniProtKB-KW"/>
</dbReference>
<dbReference type="GO" id="GO:0008033">
    <property type="term" value="P:tRNA processing"/>
    <property type="evidence" value="ECO:0007669"/>
    <property type="project" value="UniProtKB-UniRule"/>
</dbReference>
<dbReference type="CDD" id="cd11362">
    <property type="entry name" value="RNase_PH_bact"/>
    <property type="match status" value="1"/>
</dbReference>
<dbReference type="FunFam" id="3.30.230.70:FF:000003">
    <property type="entry name" value="Ribonuclease PH"/>
    <property type="match status" value="1"/>
</dbReference>
<dbReference type="Gene3D" id="3.30.230.70">
    <property type="entry name" value="GHMP Kinase, N-terminal domain"/>
    <property type="match status" value="1"/>
</dbReference>
<dbReference type="HAMAP" id="MF_00564">
    <property type="entry name" value="RNase_PH"/>
    <property type="match status" value="1"/>
</dbReference>
<dbReference type="InterPro" id="IPR001247">
    <property type="entry name" value="ExoRNase_PH_dom1"/>
</dbReference>
<dbReference type="InterPro" id="IPR015847">
    <property type="entry name" value="ExoRNase_PH_dom2"/>
</dbReference>
<dbReference type="InterPro" id="IPR036345">
    <property type="entry name" value="ExoRNase_PH_dom2_sf"/>
</dbReference>
<dbReference type="InterPro" id="IPR027408">
    <property type="entry name" value="PNPase/RNase_PH_dom_sf"/>
</dbReference>
<dbReference type="InterPro" id="IPR020568">
    <property type="entry name" value="Ribosomal_Su5_D2-typ_SF"/>
</dbReference>
<dbReference type="InterPro" id="IPR050080">
    <property type="entry name" value="RNase_PH"/>
</dbReference>
<dbReference type="InterPro" id="IPR002381">
    <property type="entry name" value="RNase_PH_bac-type"/>
</dbReference>
<dbReference type="InterPro" id="IPR018336">
    <property type="entry name" value="RNase_PH_CS"/>
</dbReference>
<dbReference type="NCBIfam" id="TIGR01966">
    <property type="entry name" value="RNasePH"/>
    <property type="match status" value="1"/>
</dbReference>
<dbReference type="PANTHER" id="PTHR11953">
    <property type="entry name" value="EXOSOME COMPLEX COMPONENT"/>
    <property type="match status" value="1"/>
</dbReference>
<dbReference type="PANTHER" id="PTHR11953:SF0">
    <property type="entry name" value="EXOSOME COMPLEX COMPONENT RRP41"/>
    <property type="match status" value="1"/>
</dbReference>
<dbReference type="Pfam" id="PF01138">
    <property type="entry name" value="RNase_PH"/>
    <property type="match status" value="1"/>
</dbReference>
<dbReference type="Pfam" id="PF03725">
    <property type="entry name" value="RNase_PH_C"/>
    <property type="match status" value="1"/>
</dbReference>
<dbReference type="SUPFAM" id="SSF55666">
    <property type="entry name" value="Ribonuclease PH domain 2-like"/>
    <property type="match status" value="1"/>
</dbReference>
<dbReference type="SUPFAM" id="SSF54211">
    <property type="entry name" value="Ribosomal protein S5 domain 2-like"/>
    <property type="match status" value="1"/>
</dbReference>
<dbReference type="PROSITE" id="PS01277">
    <property type="entry name" value="RIBONUCLEASE_PH"/>
    <property type="match status" value="1"/>
</dbReference>
<accession>Q16D02</accession>
<gene>
    <name evidence="1" type="primary">rph</name>
    <name type="ordered locus">RD1_0426</name>
</gene>
<comment type="function">
    <text evidence="1">Phosphorolytic 3'-5' exoribonuclease that plays an important role in tRNA 3'-end maturation. Removes nucleotide residues following the 3'-CCA terminus of tRNAs; can also add nucleotides to the ends of RNA molecules by using nucleoside diphosphates as substrates, but this may not be physiologically important. Probably plays a role in initiation of 16S rRNA degradation (leading to ribosome degradation) during starvation.</text>
</comment>
<comment type="catalytic activity">
    <reaction evidence="1">
        <text>tRNA(n+1) + phosphate = tRNA(n) + a ribonucleoside 5'-diphosphate</text>
        <dbReference type="Rhea" id="RHEA:10628"/>
        <dbReference type="Rhea" id="RHEA-COMP:17343"/>
        <dbReference type="Rhea" id="RHEA-COMP:17344"/>
        <dbReference type="ChEBI" id="CHEBI:43474"/>
        <dbReference type="ChEBI" id="CHEBI:57930"/>
        <dbReference type="ChEBI" id="CHEBI:173114"/>
        <dbReference type="EC" id="2.7.7.56"/>
    </reaction>
</comment>
<comment type="subunit">
    <text evidence="1">Homohexameric ring arranged as a trimer of dimers.</text>
</comment>
<comment type="similarity">
    <text evidence="1">Belongs to the RNase PH family.</text>
</comment>
<sequence length="237" mass="25237">MRPSGRELNEMRPVSIETGFTKHAEGSALIKIGDTHVLCTATIEDRVPPFIKGSGLGWVTAEYGMLPRATNTRMRRESTAGKQGGRTVEIQRLIGRSLRAGVDRVALGERQITVDCDVLQADGGTRCASITGGWVALRLAVNKLMKAGDVISDPLVDPVAAISCGIYAGQPVMDLDYPEDSEAGVDGNFIMTGSKQLIEVQMSAEGATFSRDQMNQLMDLAEKGVGELVAAQKAATA</sequence>
<organism>
    <name type="scientific">Roseobacter denitrificans (strain ATCC 33942 / OCh 114)</name>
    <name type="common">Erythrobacter sp. (strain OCh 114)</name>
    <name type="synonym">Roseobacter denitrificans</name>
    <dbReference type="NCBI Taxonomy" id="375451"/>
    <lineage>
        <taxon>Bacteria</taxon>
        <taxon>Pseudomonadati</taxon>
        <taxon>Pseudomonadota</taxon>
        <taxon>Alphaproteobacteria</taxon>
        <taxon>Rhodobacterales</taxon>
        <taxon>Roseobacteraceae</taxon>
        <taxon>Roseobacter</taxon>
    </lineage>
</organism>
<keyword id="KW-0548">Nucleotidyltransferase</keyword>
<keyword id="KW-1185">Reference proteome</keyword>
<keyword id="KW-0694">RNA-binding</keyword>
<keyword id="KW-0698">rRNA processing</keyword>
<keyword id="KW-0808">Transferase</keyword>
<keyword id="KW-0819">tRNA processing</keyword>
<keyword id="KW-0820">tRNA-binding</keyword>
<protein>
    <recommendedName>
        <fullName evidence="1">Ribonuclease PH</fullName>
        <shortName evidence="1">RNase PH</shortName>
        <ecNumber evidence="1">2.7.7.56</ecNumber>
    </recommendedName>
    <alternativeName>
        <fullName evidence="1">tRNA nucleotidyltransferase</fullName>
    </alternativeName>
</protein>
<name>RNPH_ROSDO</name>
<reference key="1">
    <citation type="journal article" date="2007" name="J. Bacteriol.">
        <title>The complete genome sequence of Roseobacter denitrificans reveals a mixotrophic rather than photosynthetic metabolism.</title>
        <authorList>
            <person name="Swingley W.D."/>
            <person name="Sadekar S."/>
            <person name="Mastrian S.D."/>
            <person name="Matthies H.J."/>
            <person name="Hao J."/>
            <person name="Ramos H."/>
            <person name="Acharya C.R."/>
            <person name="Conrad A.L."/>
            <person name="Taylor H.L."/>
            <person name="Dejesa L.C."/>
            <person name="Shah M.K."/>
            <person name="O'Huallachain M.E."/>
            <person name="Lince M.T."/>
            <person name="Blankenship R.E."/>
            <person name="Beatty J.T."/>
            <person name="Touchman J.W."/>
        </authorList>
    </citation>
    <scope>NUCLEOTIDE SEQUENCE [LARGE SCALE GENOMIC DNA]</scope>
    <source>
        <strain>ATCC 33942 / OCh 114</strain>
    </source>
</reference>